<gene>
    <name evidence="1" type="primary">yihI</name>
    <name type="ordered locus">VS_0114</name>
</gene>
<feature type="chain" id="PRO_1000149678" description="Der GTPase-activating protein YihI">
    <location>
        <begin position="1"/>
        <end position="185"/>
    </location>
</feature>
<feature type="region of interest" description="Disordered" evidence="2">
    <location>
        <begin position="1"/>
        <end position="74"/>
    </location>
</feature>
<feature type="region of interest" description="Disordered" evidence="2">
    <location>
        <begin position="145"/>
        <end position="169"/>
    </location>
</feature>
<feature type="compositionally biased region" description="Basic and acidic residues" evidence="2">
    <location>
        <begin position="23"/>
        <end position="33"/>
    </location>
</feature>
<feature type="compositionally biased region" description="Basic residues" evidence="2">
    <location>
        <begin position="34"/>
        <end position="47"/>
    </location>
</feature>
<feature type="compositionally biased region" description="Basic and acidic residues" evidence="2">
    <location>
        <begin position="48"/>
        <end position="68"/>
    </location>
</feature>
<feature type="compositionally biased region" description="Acidic residues" evidence="2">
    <location>
        <begin position="145"/>
        <end position="155"/>
    </location>
</feature>
<comment type="function">
    <text evidence="1">A GTPase-activating protein (GAP) that modifies Der/EngA GTPase function. May play a role in ribosome biogenesis.</text>
</comment>
<comment type="subunit">
    <text evidence="1">Interacts with Der.</text>
</comment>
<comment type="similarity">
    <text evidence="1">Belongs to the YihI family.</text>
</comment>
<proteinExistence type="inferred from homology"/>
<protein>
    <recommendedName>
        <fullName evidence="1">Der GTPase-activating protein YihI</fullName>
    </recommendedName>
</protein>
<dbReference type="EMBL" id="FM954972">
    <property type="protein sequence ID" value="CAV17147.1"/>
    <property type="molecule type" value="Genomic_DNA"/>
</dbReference>
<dbReference type="SMR" id="B7VHD5"/>
<dbReference type="STRING" id="575788.VS_0114"/>
<dbReference type="KEGG" id="vsp:VS_0114"/>
<dbReference type="PATRIC" id="fig|575788.5.peg.1505"/>
<dbReference type="eggNOG" id="COG3078">
    <property type="taxonomic scope" value="Bacteria"/>
</dbReference>
<dbReference type="HOGENOM" id="CLU_094104_1_0_6"/>
<dbReference type="Proteomes" id="UP000009100">
    <property type="component" value="Chromosome 1"/>
</dbReference>
<dbReference type="GO" id="GO:0005096">
    <property type="term" value="F:GTPase activator activity"/>
    <property type="evidence" value="ECO:0007669"/>
    <property type="project" value="UniProtKB-KW"/>
</dbReference>
<dbReference type="GO" id="GO:0042254">
    <property type="term" value="P:ribosome biogenesis"/>
    <property type="evidence" value="ECO:0007669"/>
    <property type="project" value="UniProtKB-KW"/>
</dbReference>
<dbReference type="HAMAP" id="MF_01058">
    <property type="entry name" value="GAP_YihI"/>
    <property type="match status" value="1"/>
</dbReference>
<dbReference type="InterPro" id="IPR007336">
    <property type="entry name" value="YihI"/>
</dbReference>
<dbReference type="NCBIfam" id="NF003560">
    <property type="entry name" value="PRK05244.1-1"/>
    <property type="match status" value="1"/>
</dbReference>
<dbReference type="Pfam" id="PF04220">
    <property type="entry name" value="YihI"/>
    <property type="match status" value="1"/>
</dbReference>
<sequence length="185" mass="20852">MGRSKKSRKPGALGAPEPMVTRNRSESDVEGRERKRVKKRKGLKSGSRHSDGSEAKQRKAALARDPRLGSKKKIPLIVEPAKKLTKQERKLSNEQELEMLENDAQLNTLLDRIENGENLGAGLQKFVDEKLDRIEHLMGRLGLLEPEDDEEEIFEEAPVASKKKASSDEDLLSQFEDFDLDSFKG</sequence>
<accession>B7VHD5</accession>
<organism>
    <name type="scientific">Vibrio atlanticus (strain LGP32)</name>
    <name type="common">Vibrio splendidus (strain Mel32)</name>
    <dbReference type="NCBI Taxonomy" id="575788"/>
    <lineage>
        <taxon>Bacteria</taxon>
        <taxon>Pseudomonadati</taxon>
        <taxon>Pseudomonadota</taxon>
        <taxon>Gammaproteobacteria</taxon>
        <taxon>Vibrionales</taxon>
        <taxon>Vibrionaceae</taxon>
        <taxon>Vibrio</taxon>
    </lineage>
</organism>
<reference key="1">
    <citation type="submission" date="2009-02" db="EMBL/GenBank/DDBJ databases">
        <title>Vibrio splendidus str. LGP32 complete genome.</title>
        <authorList>
            <person name="Mazel D."/>
            <person name="Le Roux F."/>
        </authorList>
    </citation>
    <scope>NUCLEOTIDE SEQUENCE [LARGE SCALE GENOMIC DNA]</scope>
    <source>
        <strain>LGP32</strain>
    </source>
</reference>
<evidence type="ECO:0000255" key="1">
    <source>
        <dbReference type="HAMAP-Rule" id="MF_01058"/>
    </source>
</evidence>
<evidence type="ECO:0000256" key="2">
    <source>
        <dbReference type="SAM" id="MobiDB-lite"/>
    </source>
</evidence>
<keyword id="KW-0343">GTPase activation</keyword>
<keyword id="KW-0690">Ribosome biogenesis</keyword>
<name>YIHI_VIBA3</name>